<keyword id="KW-0007">Acetylation</keyword>
<keyword id="KW-0963">Cytoplasm</keyword>
<keyword id="KW-0217">Developmental protein</keyword>
<keyword id="KW-0238">DNA-binding</keyword>
<keyword id="KW-0371">Homeobox</keyword>
<keyword id="KW-0539">Nucleus</keyword>
<keyword id="KW-0597">Phosphoprotein</keyword>
<keyword id="KW-1267">Proteomics identification</keyword>
<keyword id="KW-1185">Reference proteome</keyword>
<keyword id="KW-0804">Transcription</keyword>
<keyword id="KW-0805">Transcription regulation</keyword>
<reference key="1">
    <citation type="journal article" date="1999" name="Cytogenet. Cell Genet.">
        <title>Structure and chromosome mapping of the human SIX4 and murine Six4 genes.</title>
        <authorList>
            <person name="Ozaki H."/>
            <person name="Yamada K."/>
            <person name="Kobayashi M."/>
            <person name="Asakawa S."/>
            <person name="Minoshima S."/>
            <person name="Shimizu N."/>
            <person name="Kajitani M."/>
            <person name="Kawakami K."/>
        </authorList>
    </citation>
    <scope>NUCLEOTIDE SEQUENCE [GENOMIC DNA]</scope>
    <scope>VARIANT PRO-605</scope>
</reference>
<reference key="2">
    <citation type="journal article" date="2003" name="Nature">
        <title>The DNA sequence and analysis of human chromosome 14.</title>
        <authorList>
            <person name="Heilig R."/>
            <person name="Eckenberg R."/>
            <person name="Petit J.-L."/>
            <person name="Fonknechten N."/>
            <person name="Da Silva C."/>
            <person name="Cattolico L."/>
            <person name="Levy M."/>
            <person name="Barbe V."/>
            <person name="De Berardinis V."/>
            <person name="Ureta-Vidal A."/>
            <person name="Pelletier E."/>
            <person name="Vico V."/>
            <person name="Anthouard V."/>
            <person name="Rowen L."/>
            <person name="Madan A."/>
            <person name="Qin S."/>
            <person name="Sun H."/>
            <person name="Du H."/>
            <person name="Pepin K."/>
            <person name="Artiguenave F."/>
            <person name="Robert C."/>
            <person name="Cruaud C."/>
            <person name="Bruels T."/>
            <person name="Jaillon O."/>
            <person name="Friedlander L."/>
            <person name="Samson G."/>
            <person name="Brottier P."/>
            <person name="Cure S."/>
            <person name="Segurens B."/>
            <person name="Aniere F."/>
            <person name="Samain S."/>
            <person name="Crespeau H."/>
            <person name="Abbasi N."/>
            <person name="Aiach N."/>
            <person name="Boscus D."/>
            <person name="Dickhoff R."/>
            <person name="Dors M."/>
            <person name="Dubois I."/>
            <person name="Friedman C."/>
            <person name="Gouyvenoux M."/>
            <person name="James R."/>
            <person name="Madan A."/>
            <person name="Mairey-Estrada B."/>
            <person name="Mangenot S."/>
            <person name="Martins N."/>
            <person name="Menard M."/>
            <person name="Oztas S."/>
            <person name="Ratcliffe A."/>
            <person name="Shaffer T."/>
            <person name="Trask B."/>
            <person name="Vacherie B."/>
            <person name="Bellemere C."/>
            <person name="Belser C."/>
            <person name="Besnard-Gonnet M."/>
            <person name="Bartol-Mavel D."/>
            <person name="Boutard M."/>
            <person name="Briez-Silla S."/>
            <person name="Combette S."/>
            <person name="Dufosse-Laurent V."/>
            <person name="Ferron C."/>
            <person name="Lechaplais C."/>
            <person name="Louesse C."/>
            <person name="Muselet D."/>
            <person name="Magdelenat G."/>
            <person name="Pateau E."/>
            <person name="Petit E."/>
            <person name="Sirvain-Trukniewicz P."/>
            <person name="Trybou A."/>
            <person name="Vega-Czarny N."/>
            <person name="Bataille E."/>
            <person name="Bluet E."/>
            <person name="Bordelais I."/>
            <person name="Dubois M."/>
            <person name="Dumont C."/>
            <person name="Guerin T."/>
            <person name="Haffray S."/>
            <person name="Hammadi R."/>
            <person name="Muanga J."/>
            <person name="Pellouin V."/>
            <person name="Robert D."/>
            <person name="Wunderle E."/>
            <person name="Gauguet G."/>
            <person name="Roy A."/>
            <person name="Sainte-Marthe L."/>
            <person name="Verdier J."/>
            <person name="Verdier-Discala C."/>
            <person name="Hillier L.W."/>
            <person name="Fulton L."/>
            <person name="McPherson J."/>
            <person name="Matsuda F."/>
            <person name="Wilson R."/>
            <person name="Scarpelli C."/>
            <person name="Gyapay G."/>
            <person name="Wincker P."/>
            <person name="Saurin W."/>
            <person name="Quetier F."/>
            <person name="Waterston R."/>
            <person name="Hood L."/>
            <person name="Weissenbach J."/>
        </authorList>
    </citation>
    <scope>NUCLEOTIDE SEQUENCE [LARGE SCALE GENOMIC DNA]</scope>
</reference>
<reference key="3">
    <citation type="submission" date="2005-07" db="EMBL/GenBank/DDBJ databases">
        <authorList>
            <person name="Mural R.J."/>
            <person name="Istrail S."/>
            <person name="Sutton G.G."/>
            <person name="Florea L."/>
            <person name="Halpern A.L."/>
            <person name="Mobarry C.M."/>
            <person name="Lippert R."/>
            <person name="Walenz B."/>
            <person name="Shatkay H."/>
            <person name="Dew I."/>
            <person name="Miller J.R."/>
            <person name="Flanigan M.J."/>
            <person name="Edwards N.J."/>
            <person name="Bolanos R."/>
            <person name="Fasulo D."/>
            <person name="Halldorsson B.V."/>
            <person name="Hannenhalli S."/>
            <person name="Turner R."/>
            <person name="Yooseph S."/>
            <person name="Lu F."/>
            <person name="Nusskern D.R."/>
            <person name="Shue B.C."/>
            <person name="Zheng X.H."/>
            <person name="Zhong F."/>
            <person name="Delcher A.L."/>
            <person name="Huson D.H."/>
            <person name="Kravitz S.A."/>
            <person name="Mouchard L."/>
            <person name="Reinert K."/>
            <person name="Remington K.A."/>
            <person name="Clark A.G."/>
            <person name="Waterman M.S."/>
            <person name="Eichler E.E."/>
            <person name="Adams M.D."/>
            <person name="Hunkapiller M.W."/>
            <person name="Myers E.W."/>
            <person name="Venter J.C."/>
        </authorList>
    </citation>
    <scope>NUCLEOTIDE SEQUENCE [LARGE SCALE GENOMIC DNA]</scope>
</reference>
<reference key="4">
    <citation type="journal article" date="2004" name="Genome Res.">
        <title>The status, quality, and expansion of the NIH full-length cDNA project: the Mammalian Gene Collection (MGC).</title>
        <authorList>
            <consortium name="The MGC Project Team"/>
        </authorList>
    </citation>
    <scope>NUCLEOTIDE SEQUENCE [LARGE SCALE MRNA] OF 22-781</scope>
    <scope>VARIANT PRO-605</scope>
</reference>
<reference key="5">
    <citation type="journal article" date="2004" name="Mol. Cell. Biol.">
        <title>Quantitative proteomic identification of six4 as the trex-binding factor in the muscle creatine kinase enhancer.</title>
        <authorList>
            <person name="Himeda C.L."/>
            <person name="Ranish J.A."/>
            <person name="Angello J.C."/>
            <person name="Maire P."/>
            <person name="Aebersold R."/>
            <person name="Hauschka S.D."/>
        </authorList>
    </citation>
    <scope>IDENTIFICATION BY MASS SPECTROMETRY</scope>
</reference>
<reference key="6">
    <citation type="journal article" date="2007" name="Science">
        <title>ATM and ATR substrate analysis reveals extensive protein networks responsive to DNA damage.</title>
        <authorList>
            <person name="Matsuoka S."/>
            <person name="Ballif B.A."/>
            <person name="Smogorzewska A."/>
            <person name="McDonald E.R. III"/>
            <person name="Hurov K.E."/>
            <person name="Luo J."/>
            <person name="Bakalarski C.E."/>
            <person name="Zhao Z."/>
            <person name="Solimini N."/>
            <person name="Lerenthal Y."/>
            <person name="Shiloh Y."/>
            <person name="Gygi S.P."/>
            <person name="Elledge S.J."/>
        </authorList>
    </citation>
    <scope>PHOSPHORYLATION [LARGE SCALE ANALYSIS] AT SER-640</scope>
    <scope>IDENTIFICATION BY MASS SPECTROMETRY [LARGE SCALE ANALYSIS]</scope>
    <source>
        <tissue>Embryonic kidney</tissue>
    </source>
</reference>
<reference key="7">
    <citation type="journal article" date="2011" name="Sci. Signal.">
        <title>System-wide temporal characterization of the proteome and phosphoproteome of human embryonic stem cell differentiation.</title>
        <authorList>
            <person name="Rigbolt K.T."/>
            <person name="Prokhorova T.A."/>
            <person name="Akimov V."/>
            <person name="Henningsen J."/>
            <person name="Johansen P.T."/>
            <person name="Kratchmarova I."/>
            <person name="Kassem M."/>
            <person name="Mann M."/>
            <person name="Olsen J.V."/>
            <person name="Blagoev B."/>
        </authorList>
    </citation>
    <scope>ACETYLATION [LARGE SCALE ANALYSIS] AT SER-2</scope>
    <scope>CLEAVAGE OF INITIATOR METHIONINE [LARGE SCALE ANALYSIS]</scope>
    <scope>IDENTIFICATION BY MASS SPECTROMETRY [LARGE SCALE ANALYSIS]</scope>
</reference>
<reference key="8">
    <citation type="journal article" date="2006" name="Science">
        <title>The consensus coding sequences of human breast and colorectal cancers.</title>
        <authorList>
            <person name="Sjoeblom T."/>
            <person name="Jones S."/>
            <person name="Wood L.D."/>
            <person name="Parsons D.W."/>
            <person name="Lin J."/>
            <person name="Barber T.D."/>
            <person name="Mandelker D."/>
            <person name="Leary R.J."/>
            <person name="Ptak J."/>
            <person name="Silliman N."/>
            <person name="Szabo S."/>
            <person name="Buckhaults P."/>
            <person name="Farrell C."/>
            <person name="Meeh P."/>
            <person name="Markowitz S.D."/>
            <person name="Willis J."/>
            <person name="Dawson D."/>
            <person name="Willson J.K.V."/>
            <person name="Gazdar A.F."/>
            <person name="Hartigan J."/>
            <person name="Wu L."/>
            <person name="Liu C."/>
            <person name="Parmigiani G."/>
            <person name="Park B.H."/>
            <person name="Bachman K.E."/>
            <person name="Papadopoulos N."/>
            <person name="Vogelstein B."/>
            <person name="Kinzler K.W."/>
            <person name="Velculescu V.E."/>
        </authorList>
    </citation>
    <scope>VARIANTS [LARGE SCALE ANALYSIS] GLN-23; ASP-446 AND GLU-780</scope>
</reference>
<proteinExistence type="evidence at protein level"/>
<accession>Q9UIU6</accession>
<accession>Q4QQH5</accession>
<accession>Q4V764</accession>
<sequence length="781" mass="82933">MSSSSPTGQIASAADIKQENGMESASEGQEAHREVAGGAAVGLSPPAPAPFPLEPGDAATAAARVSGEEGAVAAAAAGAAADQVQLHSELLGRHHHAAAAAAQTPLAFSPDHVACVCEALQQGGNLDRLARFLWSLPQSDLLRGNESLLKARALVAFHQGIYPELYSILESHSFESANHPLLQQLWYKARYTEAERARGRPLGAVDKYRLRRKFPLPRTIWDGEETVYCFKEKSRNALKELYKQNRYPSPAEKRHLAKITGLSLTQVSNWFKNRRQRDRNPSETQSKSESDGNPSTEDESSKGHEDLSPHPLSSSSDGITNLSLSSHMEPVYMQQIGNAKISLSSSGVLLNGSLVPASTSPVFLNGNSFIQGPSGVILNGLNVGNTQAVALNPPKMSSNIVSNGISMTDILGSTSQDVKEFKVLQSSANSATTTSYSPSVPVSFPGLIPSTEVKREGIQTVASQDGGSVVTFTTPVQINQYGIVQIPNSGANSQFLNGSIGFSPLQLPPVSVAASQGNISVSSSTSDGSTFTSESTTVQQGKVFLSSLAPSAVVYTVPNTGQTIGSVKQEGLERSLVFSQLMPVNQNAQVNANLSSENISGSGLHPLASSLVNVSPTHNFSLSPSTLLNPTELNRDIADSQPMSAPVASKSTVTSVSNTNYATLQNCSLITGQDLLSVPMTQAALGEIVPTAEDQVGHPSPAVHQDFVQEHRLVLQSVANMKENFLSNSESKATSSLMMLDSKSKYVLDGMVDTVCEDLETDKKELAKLQTVQLDEDMQDL</sequence>
<gene>
    <name type="primary">SIX4</name>
</gene>
<feature type="initiator methionine" description="Removed" evidence="9">
    <location>
        <position position="1"/>
    </location>
</feature>
<feature type="chain" id="PRO_0000049303" description="Homeobox protein SIX4">
    <location>
        <begin position="2"/>
        <end position="781"/>
    </location>
</feature>
<feature type="DNA-binding region" description="Homeobox" evidence="2">
    <location>
        <begin position="223"/>
        <end position="282"/>
    </location>
</feature>
<feature type="region of interest" description="Disordered" evidence="3">
    <location>
        <begin position="1"/>
        <end position="55"/>
    </location>
</feature>
<feature type="region of interest" description="Disordered" evidence="3">
    <location>
        <begin position="270"/>
        <end position="321"/>
    </location>
</feature>
<feature type="compositionally biased region" description="Polar residues" evidence="3">
    <location>
        <begin position="1"/>
        <end position="10"/>
    </location>
</feature>
<feature type="compositionally biased region" description="Basic and acidic residues" evidence="3">
    <location>
        <begin position="278"/>
        <end position="290"/>
    </location>
</feature>
<feature type="compositionally biased region" description="Basic and acidic residues" evidence="3">
    <location>
        <begin position="299"/>
        <end position="308"/>
    </location>
</feature>
<feature type="modified residue" description="N-acetylserine" evidence="9">
    <location>
        <position position="2"/>
    </location>
</feature>
<feature type="modified residue" description="Phosphoserine" evidence="8">
    <location>
        <position position="640"/>
    </location>
</feature>
<feature type="sequence variant" id="VAR_036441" description="In a breast cancer sample; somatic mutation." evidence="6">
    <original>E</original>
    <variation>Q</variation>
    <location>
        <position position="23"/>
    </location>
</feature>
<feature type="sequence variant" id="VAR_036442" description="In a breast cancer sample; somatic mutation; dbSNP:rs750515774." evidence="6">
    <original>G</original>
    <variation>D</variation>
    <location>
        <position position="446"/>
    </location>
</feature>
<feature type="sequence variant" id="VAR_058281" description="In dbSNP:rs3742636." evidence="4 5">
    <original>H</original>
    <variation>P</variation>
    <location>
        <position position="605"/>
    </location>
</feature>
<feature type="sequence variant" id="VAR_036443" description="In a breast cancer sample; somatic mutation; dbSNP:rs1264571513." evidence="6">
    <original>D</original>
    <variation>E</variation>
    <location>
        <position position="780"/>
    </location>
</feature>
<protein>
    <recommendedName>
        <fullName>Homeobox protein SIX4</fullName>
    </recommendedName>
    <alternativeName>
        <fullName>Sine oculis homeobox homolog 4</fullName>
    </alternativeName>
</protein>
<comment type="function">
    <text evidence="1">Transcriptional regulator which can act as both a transcriptional repressor and activator by binding a DNA sequence on these target genes and is involved in processes like cell differentiation, cell migration and cell survival. Transactivates gene expression by binding a 5'-[CAT]A[CT][CT][CTG]GA[GAT]-3' motif present in the Trex site and a 5'-TCA[AG][AG]TTNC-3' motif present in the MEF3 site of the muscle-specific genes enhancer. Acts cooperatively with EYA proteins to transactivate their target genes through interaction and nuclear translocation of EYA protein. Acts synergistically with SIX1 to regulate target genes involved in formation of various organs, including muscle, kidney, gonad, ganglia, olfactory epithelium and cranial skeleton. Plays a role in several important steps of muscle development. Controls the genesis of hypaxial myogenic progenitors in the dermomyotome by transactivating PAX3 and the delamination and migration of the hypaxial precursors from the ventral lip to the limb buds through the transactivation of PAX3, MET and LBX1. Controls myoblast determination by transactivating MYF5, MYOD1 and MYF6. Controls somitic differentiation in myocyte through MYOG transactivation. Plays a role in synaptogenesis and sarcomere organization by participating in myofiber specialization during embryogenesis by activating fast muscle program in the primary myotome resulting in an up-regulation of fast muscle genes, including ATP2A1, MYL1 and TNNT3. Simultaneously, is also able to activate inhibitors of slow muscle genes, such as SOX6, HRASLS, and HDAC4, thereby restricting the activation of the slow muscle genes. During muscle regeneration, negatively regulates differentiation of muscle satellite cells through down-regulation of MYOG expression. During kidney development regulates the early stages of metanephros development and ureteric bud formation through regulation of GDNF, SALL1, PAX8 and PAX2 expression. Plays a role in gonad development by regulating both testis determination and size determination. In gonadal sex determination, transactivates ZFPM2 by binding a MEF3 consensus sequence, resulting in SRY up-regulation. In gonadal size determination, transactivates NR5A1 by binding a MEF3 consensus sequence resulting in gonadal precursor cell formation regulation. During olfactory development mediates the specification and patterning of olfactory placode through fibroblast growth factor and BMP4 signaling pathways and also regulates epithelial cell proliferation during placode formation. Promotes survival of sensory neurons during early trigeminal gangliogenesis. In the developing dorsal root ganglia, up-regulates SLC12A2 transcription. Regulates early thymus/parathyroid organogenesis through regulation of GCM2 and FOXN1 expression. Forms gustatory papillae during development of the tongue. Also plays a role during embryonic cranial skeleton morphogenesis.</text>
</comment>
<comment type="subunit">
    <text evidence="1">Interacts with EYA3; acts cooperatively with EYA3 to transactivate target genes through interaction and nuclear translocation of EYA3 protein.</text>
</comment>
<comment type="subcellular location">
    <subcellularLocation>
        <location evidence="1">Nucleus</location>
    </subcellularLocation>
    <subcellularLocation>
        <location evidence="1">Cytoplasm</location>
    </subcellularLocation>
</comment>
<comment type="similarity">
    <text evidence="7">Belongs to the SIX/Sine oculis homeobox family.</text>
</comment>
<comment type="sequence caution" evidence="7">
    <conflict type="erroneous initiation">
        <sequence resource="EMBL-CDS" id="BAA86223"/>
    </conflict>
</comment>
<comment type="sequence caution" evidence="7">
    <conflict type="erroneous initiation">
        <sequence resource="EMBL-CDS" id="EAW80786"/>
    </conflict>
</comment>
<dbReference type="EMBL" id="AB024687">
    <property type="protein sequence ID" value="BAA86223.1"/>
    <property type="status" value="ALT_INIT"/>
    <property type="molecule type" value="Genomic_DNA"/>
</dbReference>
<dbReference type="EMBL" id="AL132777">
    <property type="status" value="NOT_ANNOTATED_CDS"/>
    <property type="molecule type" value="Genomic_DNA"/>
</dbReference>
<dbReference type="EMBL" id="CH471061">
    <property type="protein sequence ID" value="EAW80786.1"/>
    <property type="status" value="ALT_INIT"/>
    <property type="molecule type" value="Genomic_DNA"/>
</dbReference>
<dbReference type="EMBL" id="BC098135">
    <property type="protein sequence ID" value="AAH98135.1"/>
    <property type="molecule type" value="mRNA"/>
</dbReference>
<dbReference type="EMBL" id="BC098282">
    <property type="protein sequence ID" value="AAH98282.1"/>
    <property type="molecule type" value="mRNA"/>
</dbReference>
<dbReference type="EMBL" id="BC099722">
    <property type="protein sequence ID" value="AAH99722.1"/>
    <property type="molecule type" value="mRNA"/>
</dbReference>
<dbReference type="EMBL" id="BC101934">
    <property type="protein sequence ID" value="AAI01935.1"/>
    <property type="molecule type" value="mRNA"/>
</dbReference>
<dbReference type="CCDS" id="CCDS9749.2"/>
<dbReference type="RefSeq" id="NP_059116.3">
    <property type="nucleotide sequence ID" value="NM_017420.5"/>
</dbReference>
<dbReference type="SMR" id="Q9UIU6"/>
<dbReference type="BioGRID" id="119730">
    <property type="interactions" value="46"/>
</dbReference>
<dbReference type="FunCoup" id="Q9UIU6">
    <property type="interactions" value="1183"/>
</dbReference>
<dbReference type="IntAct" id="Q9UIU6">
    <property type="interactions" value="34"/>
</dbReference>
<dbReference type="MINT" id="Q9UIU6"/>
<dbReference type="STRING" id="9606.ENSP00000216513"/>
<dbReference type="GlyCosmos" id="Q9UIU6">
    <property type="glycosylation" value="1 site, 1 glycan"/>
</dbReference>
<dbReference type="GlyGen" id="Q9UIU6">
    <property type="glycosylation" value="7 sites, 1 O-linked glycan (7 sites)"/>
</dbReference>
<dbReference type="iPTMnet" id="Q9UIU6"/>
<dbReference type="PhosphoSitePlus" id="Q9UIU6"/>
<dbReference type="SwissPalm" id="Q9UIU6"/>
<dbReference type="BioMuta" id="SIX4"/>
<dbReference type="DMDM" id="254763333"/>
<dbReference type="jPOST" id="Q9UIU6"/>
<dbReference type="MassIVE" id="Q9UIU6"/>
<dbReference type="PaxDb" id="9606-ENSP00000216513"/>
<dbReference type="PeptideAtlas" id="Q9UIU6"/>
<dbReference type="ProteomicsDB" id="84568"/>
<dbReference type="Pumba" id="Q9UIU6"/>
<dbReference type="Antibodypedia" id="24389">
    <property type="antibodies" value="179 antibodies from 27 providers"/>
</dbReference>
<dbReference type="DNASU" id="51804"/>
<dbReference type="Ensembl" id="ENST00000216513.5">
    <property type="protein sequence ID" value="ENSP00000216513.4"/>
    <property type="gene ID" value="ENSG00000100625.9"/>
</dbReference>
<dbReference type="GeneID" id="51804"/>
<dbReference type="KEGG" id="hsa:51804"/>
<dbReference type="MANE-Select" id="ENST00000216513.5">
    <property type="protein sequence ID" value="ENSP00000216513.4"/>
    <property type="RefSeq nucleotide sequence ID" value="NM_017420.5"/>
    <property type="RefSeq protein sequence ID" value="NP_059116.3"/>
</dbReference>
<dbReference type="UCSC" id="uc001xfc.4">
    <property type="organism name" value="human"/>
</dbReference>
<dbReference type="AGR" id="HGNC:10890"/>
<dbReference type="CTD" id="51804"/>
<dbReference type="DisGeNET" id="51804"/>
<dbReference type="GeneCards" id="SIX4"/>
<dbReference type="HGNC" id="HGNC:10890">
    <property type="gene designation" value="SIX4"/>
</dbReference>
<dbReference type="HPA" id="ENSG00000100625">
    <property type="expression patterns" value="Group enriched (parathyroid gland, salivary gland, skeletal muscle, tongue)"/>
</dbReference>
<dbReference type="MIM" id="606342">
    <property type="type" value="gene"/>
</dbReference>
<dbReference type="neXtProt" id="NX_Q9UIU6"/>
<dbReference type="OpenTargets" id="ENSG00000100625"/>
<dbReference type="PharmGKB" id="PA35790"/>
<dbReference type="VEuPathDB" id="HostDB:ENSG00000100625"/>
<dbReference type="eggNOG" id="KOG0775">
    <property type="taxonomic scope" value="Eukaryota"/>
</dbReference>
<dbReference type="GeneTree" id="ENSGT00940000160820"/>
<dbReference type="HOGENOM" id="CLU_020633_2_0_1"/>
<dbReference type="InParanoid" id="Q9UIU6"/>
<dbReference type="OMA" id="MCGEMEA"/>
<dbReference type="OrthoDB" id="3501850at2759"/>
<dbReference type="PAN-GO" id="Q9UIU6">
    <property type="GO annotations" value="5 GO annotations based on evolutionary models"/>
</dbReference>
<dbReference type="PhylomeDB" id="Q9UIU6"/>
<dbReference type="TreeFam" id="TF315545"/>
<dbReference type="PathwayCommons" id="Q9UIU6"/>
<dbReference type="SignaLink" id="Q9UIU6"/>
<dbReference type="SIGNOR" id="Q9UIU6"/>
<dbReference type="BioGRID-ORCS" id="51804">
    <property type="hits" value="18 hits in 1181 CRISPR screens"/>
</dbReference>
<dbReference type="ChiTaRS" id="SIX4">
    <property type="organism name" value="human"/>
</dbReference>
<dbReference type="GeneWiki" id="SIX4"/>
<dbReference type="GenomeRNAi" id="51804"/>
<dbReference type="Pharos" id="Q9UIU6">
    <property type="development level" value="Tbio"/>
</dbReference>
<dbReference type="PRO" id="PR:Q9UIU6"/>
<dbReference type="Proteomes" id="UP000005640">
    <property type="component" value="Chromosome 14"/>
</dbReference>
<dbReference type="RNAct" id="Q9UIU6">
    <property type="molecule type" value="protein"/>
</dbReference>
<dbReference type="Bgee" id="ENSG00000100625">
    <property type="expression patterns" value="Expressed in bronchial epithelial cell and 161 other cell types or tissues"/>
</dbReference>
<dbReference type="ExpressionAtlas" id="Q9UIU6">
    <property type="expression patterns" value="baseline and differential"/>
</dbReference>
<dbReference type="GO" id="GO:0000785">
    <property type="term" value="C:chromatin"/>
    <property type="evidence" value="ECO:0000247"/>
    <property type="project" value="NTNU_SB"/>
</dbReference>
<dbReference type="GO" id="GO:0005737">
    <property type="term" value="C:cytoplasm"/>
    <property type="evidence" value="ECO:0000250"/>
    <property type="project" value="UniProtKB"/>
</dbReference>
<dbReference type="GO" id="GO:0005634">
    <property type="term" value="C:nucleus"/>
    <property type="evidence" value="ECO:0000250"/>
    <property type="project" value="UniProtKB"/>
</dbReference>
<dbReference type="GO" id="GO:0005667">
    <property type="term" value="C:transcription regulator complex"/>
    <property type="evidence" value="ECO:0000318"/>
    <property type="project" value="GO_Central"/>
</dbReference>
<dbReference type="GO" id="GO:0001228">
    <property type="term" value="F:DNA-binding transcription activator activity, RNA polymerase II-specific"/>
    <property type="evidence" value="ECO:0007669"/>
    <property type="project" value="Ensembl"/>
</dbReference>
<dbReference type="GO" id="GO:0000981">
    <property type="term" value="F:DNA-binding transcription factor activity, RNA polymerase II-specific"/>
    <property type="evidence" value="ECO:0000247"/>
    <property type="project" value="NTNU_SB"/>
</dbReference>
<dbReference type="GO" id="GO:0000978">
    <property type="term" value="F:RNA polymerase II cis-regulatory region sequence-specific DNA binding"/>
    <property type="evidence" value="ECO:0000318"/>
    <property type="project" value="GO_Central"/>
</dbReference>
<dbReference type="GO" id="GO:1990837">
    <property type="term" value="F:sequence-specific double-stranded DNA binding"/>
    <property type="evidence" value="ECO:0000314"/>
    <property type="project" value="ARUK-UCL"/>
</dbReference>
<dbReference type="GO" id="GO:0009653">
    <property type="term" value="P:anatomical structure morphogenesis"/>
    <property type="evidence" value="ECO:0000304"/>
    <property type="project" value="ProtInc"/>
</dbReference>
<dbReference type="GO" id="GO:0048701">
    <property type="term" value="P:embryonic cranial skeleton morphogenesis"/>
    <property type="evidence" value="ECO:0007669"/>
    <property type="project" value="Ensembl"/>
</dbReference>
<dbReference type="GO" id="GO:0061197">
    <property type="term" value="P:fungiform papilla morphogenesis"/>
    <property type="evidence" value="ECO:0000250"/>
    <property type="project" value="UniProtKB"/>
</dbReference>
<dbReference type="GO" id="GO:0048699">
    <property type="term" value="P:generation of neurons"/>
    <property type="evidence" value="ECO:0000250"/>
    <property type="project" value="UniProtKB"/>
</dbReference>
<dbReference type="GO" id="GO:0042472">
    <property type="term" value="P:inner ear morphogenesis"/>
    <property type="evidence" value="ECO:0007669"/>
    <property type="project" value="Ensembl"/>
</dbReference>
<dbReference type="GO" id="GO:0008584">
    <property type="term" value="P:male gonad development"/>
    <property type="evidence" value="ECO:0000250"/>
    <property type="project" value="UniProtKB"/>
</dbReference>
<dbReference type="GO" id="GO:0030238">
    <property type="term" value="P:male sex determination"/>
    <property type="evidence" value="ECO:0000250"/>
    <property type="project" value="UniProtKB"/>
</dbReference>
<dbReference type="GO" id="GO:0046661">
    <property type="term" value="P:male sex differentiation"/>
    <property type="evidence" value="ECO:0000250"/>
    <property type="project" value="UniProtKB"/>
</dbReference>
<dbReference type="GO" id="GO:0072075">
    <property type="term" value="P:metanephric mesenchyme development"/>
    <property type="evidence" value="ECO:0000250"/>
    <property type="project" value="UniProtKB"/>
</dbReference>
<dbReference type="GO" id="GO:0051451">
    <property type="term" value="P:myoblast migration"/>
    <property type="evidence" value="ECO:0007669"/>
    <property type="project" value="Ensembl"/>
</dbReference>
<dbReference type="GO" id="GO:0061055">
    <property type="term" value="P:myotome development"/>
    <property type="evidence" value="ECO:0000250"/>
    <property type="project" value="UniProtKB"/>
</dbReference>
<dbReference type="GO" id="GO:0043066">
    <property type="term" value="P:negative regulation of apoptotic process"/>
    <property type="evidence" value="ECO:0000250"/>
    <property type="project" value="UniProtKB"/>
</dbReference>
<dbReference type="GO" id="GO:0045892">
    <property type="term" value="P:negative regulation of DNA-templated transcription"/>
    <property type="evidence" value="ECO:0000250"/>
    <property type="project" value="UniProtKB"/>
</dbReference>
<dbReference type="GO" id="GO:0043524">
    <property type="term" value="P:negative regulation of neuron apoptotic process"/>
    <property type="evidence" value="ECO:0000250"/>
    <property type="project" value="UniProtKB"/>
</dbReference>
<dbReference type="GO" id="GO:1902725">
    <property type="term" value="P:negative regulation of satellite cell differentiation"/>
    <property type="evidence" value="ECO:0000250"/>
    <property type="project" value="UniProtKB"/>
</dbReference>
<dbReference type="GO" id="GO:0030910">
    <property type="term" value="P:olfactory placode formation"/>
    <property type="evidence" value="ECO:0000250"/>
    <property type="project" value="UniProtKB"/>
</dbReference>
<dbReference type="GO" id="GO:0060037">
    <property type="term" value="P:pharyngeal system development"/>
    <property type="evidence" value="ECO:0000250"/>
    <property type="project" value="UniProtKB"/>
</dbReference>
<dbReference type="GO" id="GO:0090190">
    <property type="term" value="P:positive regulation of branching involved in ureteric bud morphogenesis"/>
    <property type="evidence" value="ECO:0000250"/>
    <property type="project" value="UniProtKB"/>
</dbReference>
<dbReference type="GO" id="GO:0045893">
    <property type="term" value="P:positive regulation of DNA-templated transcription"/>
    <property type="evidence" value="ECO:0000250"/>
    <property type="project" value="UniProtKB"/>
</dbReference>
<dbReference type="GO" id="GO:0072107">
    <property type="term" value="P:positive regulation of ureteric bud formation"/>
    <property type="evidence" value="ECO:0000250"/>
    <property type="project" value="UniProtKB"/>
</dbReference>
<dbReference type="GO" id="GO:0034504">
    <property type="term" value="P:protein localization to nucleus"/>
    <property type="evidence" value="ECO:0000250"/>
    <property type="project" value="UniProtKB"/>
</dbReference>
<dbReference type="GO" id="GO:0072095">
    <property type="term" value="P:regulation of branch elongation involved in ureteric bud branching"/>
    <property type="evidence" value="ECO:0000250"/>
    <property type="project" value="UniProtKB"/>
</dbReference>
<dbReference type="GO" id="GO:0050678">
    <property type="term" value="P:regulation of epithelial cell proliferation"/>
    <property type="evidence" value="ECO:0000250"/>
    <property type="project" value="UniProtKB"/>
</dbReference>
<dbReference type="GO" id="GO:0032880">
    <property type="term" value="P:regulation of protein localization"/>
    <property type="evidence" value="ECO:0007669"/>
    <property type="project" value="Ensembl"/>
</dbReference>
<dbReference type="GO" id="GO:0008582">
    <property type="term" value="P:regulation of synaptic assembly at neuromuscular junction"/>
    <property type="evidence" value="ECO:0007669"/>
    <property type="project" value="Ensembl"/>
</dbReference>
<dbReference type="GO" id="GO:0006357">
    <property type="term" value="P:regulation of transcription by RNA polymerase II"/>
    <property type="evidence" value="ECO:0000318"/>
    <property type="project" value="GO_Central"/>
</dbReference>
<dbReference type="GO" id="GO:0045214">
    <property type="term" value="P:sarcomere organization"/>
    <property type="evidence" value="ECO:0000250"/>
    <property type="project" value="UniProtKB"/>
</dbReference>
<dbReference type="GO" id="GO:0098528">
    <property type="term" value="P:skeletal muscle fiber differentiation"/>
    <property type="evidence" value="ECO:0000250"/>
    <property type="project" value="UniProtKB"/>
</dbReference>
<dbReference type="GO" id="GO:0007519">
    <property type="term" value="P:skeletal muscle tissue development"/>
    <property type="evidence" value="ECO:0000250"/>
    <property type="project" value="UniProtKB"/>
</dbReference>
<dbReference type="GO" id="GO:0048538">
    <property type="term" value="P:thymus development"/>
    <property type="evidence" value="ECO:0007669"/>
    <property type="project" value="Ensembl"/>
</dbReference>
<dbReference type="GO" id="GO:0043586">
    <property type="term" value="P:tongue development"/>
    <property type="evidence" value="ECO:0000250"/>
    <property type="project" value="UniProtKB"/>
</dbReference>
<dbReference type="GO" id="GO:0061551">
    <property type="term" value="P:trigeminal ganglion development"/>
    <property type="evidence" value="ECO:0000250"/>
    <property type="project" value="UniProtKB"/>
</dbReference>
<dbReference type="CDD" id="cd00086">
    <property type="entry name" value="homeodomain"/>
    <property type="match status" value="1"/>
</dbReference>
<dbReference type="FunFam" id="1.10.10.60:FF:000085">
    <property type="entry name" value="SIX homeobox 5"/>
    <property type="match status" value="1"/>
</dbReference>
<dbReference type="Gene3D" id="1.10.10.60">
    <property type="entry name" value="Homeodomain-like"/>
    <property type="match status" value="1"/>
</dbReference>
<dbReference type="InterPro" id="IPR001356">
    <property type="entry name" value="HD"/>
</dbReference>
<dbReference type="InterPro" id="IPR017970">
    <property type="entry name" value="Homeobox_CS"/>
</dbReference>
<dbReference type="InterPro" id="IPR009057">
    <property type="entry name" value="Homeodomain-like_sf"/>
</dbReference>
<dbReference type="InterPro" id="IPR031701">
    <property type="entry name" value="SIX1_SD"/>
</dbReference>
<dbReference type="PANTHER" id="PTHR10390">
    <property type="entry name" value="HOMEOBOX PROTEIN SIX"/>
    <property type="match status" value="1"/>
</dbReference>
<dbReference type="PANTHER" id="PTHR10390:SF36">
    <property type="entry name" value="HOMEOBOX PROTEIN SIX4"/>
    <property type="match status" value="1"/>
</dbReference>
<dbReference type="Pfam" id="PF00046">
    <property type="entry name" value="Homeodomain"/>
    <property type="match status" value="1"/>
</dbReference>
<dbReference type="Pfam" id="PF16878">
    <property type="entry name" value="SIX1_SD"/>
    <property type="match status" value="1"/>
</dbReference>
<dbReference type="SMART" id="SM00389">
    <property type="entry name" value="HOX"/>
    <property type="match status" value="1"/>
</dbReference>
<dbReference type="SUPFAM" id="SSF46689">
    <property type="entry name" value="Homeodomain-like"/>
    <property type="match status" value="1"/>
</dbReference>
<dbReference type="PROSITE" id="PS00027">
    <property type="entry name" value="HOMEOBOX_1"/>
    <property type="match status" value="1"/>
</dbReference>
<dbReference type="PROSITE" id="PS50071">
    <property type="entry name" value="HOMEOBOX_2"/>
    <property type="match status" value="1"/>
</dbReference>
<evidence type="ECO:0000250" key="1">
    <source>
        <dbReference type="UniProtKB" id="Q61321"/>
    </source>
</evidence>
<evidence type="ECO:0000255" key="2">
    <source>
        <dbReference type="PROSITE-ProRule" id="PRU00108"/>
    </source>
</evidence>
<evidence type="ECO:0000256" key="3">
    <source>
        <dbReference type="SAM" id="MobiDB-lite"/>
    </source>
</evidence>
<evidence type="ECO:0000269" key="4">
    <source>
    </source>
</evidence>
<evidence type="ECO:0000269" key="5">
    <source>
    </source>
</evidence>
<evidence type="ECO:0000269" key="6">
    <source>
    </source>
</evidence>
<evidence type="ECO:0000305" key="7"/>
<evidence type="ECO:0007744" key="8">
    <source>
    </source>
</evidence>
<evidence type="ECO:0007744" key="9">
    <source>
    </source>
</evidence>
<name>SIX4_HUMAN</name>
<organism>
    <name type="scientific">Homo sapiens</name>
    <name type="common">Human</name>
    <dbReference type="NCBI Taxonomy" id="9606"/>
    <lineage>
        <taxon>Eukaryota</taxon>
        <taxon>Metazoa</taxon>
        <taxon>Chordata</taxon>
        <taxon>Craniata</taxon>
        <taxon>Vertebrata</taxon>
        <taxon>Euteleostomi</taxon>
        <taxon>Mammalia</taxon>
        <taxon>Eutheria</taxon>
        <taxon>Euarchontoglires</taxon>
        <taxon>Primates</taxon>
        <taxon>Haplorrhini</taxon>
        <taxon>Catarrhini</taxon>
        <taxon>Hominidae</taxon>
        <taxon>Homo</taxon>
    </lineage>
</organism>